<evidence type="ECO:0000255" key="1">
    <source>
        <dbReference type="HAMAP-Rule" id="MF_00251"/>
    </source>
</evidence>
<evidence type="ECO:0000305" key="2"/>
<dbReference type="EMBL" id="CP000360">
    <property type="protein sequence ID" value="ABF40252.1"/>
    <property type="status" value="ALT_INIT"/>
    <property type="molecule type" value="Genomic_DNA"/>
</dbReference>
<dbReference type="RefSeq" id="WP_041855501.1">
    <property type="nucleotide sequence ID" value="NC_008009.1"/>
</dbReference>
<dbReference type="SMR" id="Q1IS98"/>
<dbReference type="STRING" id="204669.Acid345_1250"/>
<dbReference type="EnsemblBacteria" id="ABF40252">
    <property type="protein sequence ID" value="ABF40252"/>
    <property type="gene ID" value="Acid345_1250"/>
</dbReference>
<dbReference type="KEGG" id="aba:Acid345_1250"/>
<dbReference type="eggNOG" id="COG0257">
    <property type="taxonomic scope" value="Bacteria"/>
</dbReference>
<dbReference type="HOGENOM" id="CLU_135723_6_2_0"/>
<dbReference type="OrthoDB" id="9802520at2"/>
<dbReference type="Proteomes" id="UP000002432">
    <property type="component" value="Chromosome"/>
</dbReference>
<dbReference type="GO" id="GO:0005737">
    <property type="term" value="C:cytoplasm"/>
    <property type="evidence" value="ECO:0007669"/>
    <property type="project" value="UniProtKB-ARBA"/>
</dbReference>
<dbReference type="GO" id="GO:1990904">
    <property type="term" value="C:ribonucleoprotein complex"/>
    <property type="evidence" value="ECO:0007669"/>
    <property type="project" value="UniProtKB-KW"/>
</dbReference>
<dbReference type="GO" id="GO:0005840">
    <property type="term" value="C:ribosome"/>
    <property type="evidence" value="ECO:0007669"/>
    <property type="project" value="UniProtKB-KW"/>
</dbReference>
<dbReference type="GO" id="GO:0003735">
    <property type="term" value="F:structural constituent of ribosome"/>
    <property type="evidence" value="ECO:0007669"/>
    <property type="project" value="InterPro"/>
</dbReference>
<dbReference type="GO" id="GO:0006412">
    <property type="term" value="P:translation"/>
    <property type="evidence" value="ECO:0007669"/>
    <property type="project" value="UniProtKB-UniRule"/>
</dbReference>
<dbReference type="HAMAP" id="MF_00251">
    <property type="entry name" value="Ribosomal_bL36"/>
    <property type="match status" value="1"/>
</dbReference>
<dbReference type="InterPro" id="IPR000473">
    <property type="entry name" value="Ribosomal_bL36"/>
</dbReference>
<dbReference type="InterPro" id="IPR035977">
    <property type="entry name" value="Ribosomal_bL36_sp"/>
</dbReference>
<dbReference type="NCBIfam" id="TIGR01022">
    <property type="entry name" value="rpmJ_bact"/>
    <property type="match status" value="1"/>
</dbReference>
<dbReference type="PANTHER" id="PTHR42888">
    <property type="entry name" value="50S RIBOSOMAL PROTEIN L36, CHLOROPLASTIC"/>
    <property type="match status" value="1"/>
</dbReference>
<dbReference type="PANTHER" id="PTHR42888:SF1">
    <property type="entry name" value="LARGE RIBOSOMAL SUBUNIT PROTEIN BL36C"/>
    <property type="match status" value="1"/>
</dbReference>
<dbReference type="Pfam" id="PF00444">
    <property type="entry name" value="Ribosomal_L36"/>
    <property type="match status" value="1"/>
</dbReference>
<dbReference type="SUPFAM" id="SSF57840">
    <property type="entry name" value="Ribosomal protein L36"/>
    <property type="match status" value="1"/>
</dbReference>
<dbReference type="PROSITE" id="PS00828">
    <property type="entry name" value="RIBOSOMAL_L36"/>
    <property type="match status" value="1"/>
</dbReference>
<feature type="chain" id="PRO_0000344632" description="Large ribosomal subunit protein bL36">
    <location>
        <begin position="1"/>
        <end position="37"/>
    </location>
</feature>
<protein>
    <recommendedName>
        <fullName evidence="1">Large ribosomal subunit protein bL36</fullName>
    </recommendedName>
    <alternativeName>
        <fullName evidence="2">50S ribosomal protein L36</fullName>
    </alternativeName>
</protein>
<keyword id="KW-1185">Reference proteome</keyword>
<keyword id="KW-0687">Ribonucleoprotein</keyword>
<keyword id="KW-0689">Ribosomal protein</keyword>
<gene>
    <name evidence="1" type="primary">rpmJ</name>
    <name type="ordered locus">Acid345_1250</name>
</gene>
<organism>
    <name type="scientific">Koribacter versatilis (strain Ellin345)</name>
    <dbReference type="NCBI Taxonomy" id="204669"/>
    <lineage>
        <taxon>Bacteria</taxon>
        <taxon>Pseudomonadati</taxon>
        <taxon>Acidobacteriota</taxon>
        <taxon>Terriglobia</taxon>
        <taxon>Terriglobales</taxon>
        <taxon>Candidatus Korobacteraceae</taxon>
        <taxon>Candidatus Korobacter</taxon>
    </lineage>
</organism>
<accession>Q1IS98</accession>
<reference key="1">
    <citation type="journal article" date="2009" name="Appl. Environ. Microbiol.">
        <title>Three genomes from the phylum Acidobacteria provide insight into the lifestyles of these microorganisms in soils.</title>
        <authorList>
            <person name="Ward N.L."/>
            <person name="Challacombe J.F."/>
            <person name="Janssen P.H."/>
            <person name="Henrissat B."/>
            <person name="Coutinho P.M."/>
            <person name="Wu M."/>
            <person name="Xie G."/>
            <person name="Haft D.H."/>
            <person name="Sait M."/>
            <person name="Badger J."/>
            <person name="Barabote R.D."/>
            <person name="Bradley B."/>
            <person name="Brettin T.S."/>
            <person name="Brinkac L.M."/>
            <person name="Bruce D."/>
            <person name="Creasy T."/>
            <person name="Daugherty S.C."/>
            <person name="Davidsen T.M."/>
            <person name="DeBoy R.T."/>
            <person name="Detter J.C."/>
            <person name="Dodson R.J."/>
            <person name="Durkin A.S."/>
            <person name="Ganapathy A."/>
            <person name="Gwinn-Giglio M."/>
            <person name="Han C.S."/>
            <person name="Khouri H."/>
            <person name="Kiss H."/>
            <person name="Kothari S.P."/>
            <person name="Madupu R."/>
            <person name="Nelson K.E."/>
            <person name="Nelson W.C."/>
            <person name="Paulsen I."/>
            <person name="Penn K."/>
            <person name="Ren Q."/>
            <person name="Rosovitz M.J."/>
            <person name="Selengut J.D."/>
            <person name="Shrivastava S."/>
            <person name="Sullivan S.A."/>
            <person name="Tapia R."/>
            <person name="Thompson L.S."/>
            <person name="Watkins K.L."/>
            <person name="Yang Q."/>
            <person name="Yu C."/>
            <person name="Zafar N."/>
            <person name="Zhou L."/>
            <person name="Kuske C.R."/>
        </authorList>
    </citation>
    <scope>NUCLEOTIDE SEQUENCE [LARGE SCALE GENOMIC DNA]</scope>
    <source>
        <strain>Ellin345</strain>
    </source>
</reference>
<comment type="similarity">
    <text evidence="1">Belongs to the bacterial ribosomal protein bL36 family.</text>
</comment>
<comment type="sequence caution" evidence="2">
    <conflict type="erroneous initiation">
        <sequence resource="EMBL-CDS" id="ABF40252"/>
    </conflict>
</comment>
<sequence length="37" mass="4303">MKVRASVKKICDKCKVIRRHGVVRVICENAKHKQRQG</sequence>
<name>RL36_KORVE</name>
<proteinExistence type="inferred from homology"/>